<proteinExistence type="inferred from homology"/>
<dbReference type="EMBL" id="AM286415">
    <property type="protein sequence ID" value="CAL14010.1"/>
    <property type="molecule type" value="Genomic_DNA"/>
</dbReference>
<dbReference type="RefSeq" id="WP_011817355.1">
    <property type="nucleotide sequence ID" value="NC_008800.1"/>
</dbReference>
<dbReference type="RefSeq" id="YP_001008136.1">
    <property type="nucleotide sequence ID" value="NC_008800.1"/>
</dbReference>
<dbReference type="SMR" id="A1JSF2"/>
<dbReference type="KEGG" id="yen:YE3990"/>
<dbReference type="PATRIC" id="fig|393305.7.peg.4248"/>
<dbReference type="eggNOG" id="COG2909">
    <property type="taxonomic scope" value="Bacteria"/>
</dbReference>
<dbReference type="HOGENOM" id="CLU_006325_3_0_6"/>
<dbReference type="OrthoDB" id="1123107at2"/>
<dbReference type="Proteomes" id="UP000000642">
    <property type="component" value="Chromosome"/>
</dbReference>
<dbReference type="GO" id="GO:0005524">
    <property type="term" value="F:ATP binding"/>
    <property type="evidence" value="ECO:0007669"/>
    <property type="project" value="UniProtKB-UniRule"/>
</dbReference>
<dbReference type="GO" id="GO:0003677">
    <property type="term" value="F:DNA binding"/>
    <property type="evidence" value="ECO:0007669"/>
    <property type="project" value="UniProtKB-KW"/>
</dbReference>
<dbReference type="GO" id="GO:0003700">
    <property type="term" value="F:DNA-binding transcription factor activity"/>
    <property type="evidence" value="ECO:0007669"/>
    <property type="project" value="UniProtKB-UniRule"/>
</dbReference>
<dbReference type="GO" id="GO:0045913">
    <property type="term" value="P:positive regulation of carbohydrate metabolic process"/>
    <property type="evidence" value="ECO:0007669"/>
    <property type="project" value="UniProtKB-UniRule"/>
</dbReference>
<dbReference type="GO" id="GO:0045893">
    <property type="term" value="P:positive regulation of DNA-templated transcription"/>
    <property type="evidence" value="ECO:0007669"/>
    <property type="project" value="UniProtKB-UniRule"/>
</dbReference>
<dbReference type="CDD" id="cd06170">
    <property type="entry name" value="LuxR_C_like"/>
    <property type="match status" value="1"/>
</dbReference>
<dbReference type="FunFam" id="1.10.10.10:FF:000115">
    <property type="entry name" value="HTH-type transcriptional regulator MalT"/>
    <property type="match status" value="1"/>
</dbReference>
<dbReference type="Gene3D" id="1.25.40.10">
    <property type="entry name" value="Tetratricopeptide repeat domain"/>
    <property type="match status" value="1"/>
</dbReference>
<dbReference type="Gene3D" id="1.10.10.10">
    <property type="entry name" value="Winged helix-like DNA-binding domain superfamily/Winged helix DNA-binding domain"/>
    <property type="match status" value="1"/>
</dbReference>
<dbReference type="HAMAP" id="MF_01247">
    <property type="entry name" value="HTH_type_MalT"/>
    <property type="match status" value="1"/>
</dbReference>
<dbReference type="InterPro" id="IPR027417">
    <property type="entry name" value="P-loop_NTPase"/>
</dbReference>
<dbReference type="InterPro" id="IPR016032">
    <property type="entry name" value="Sig_transdc_resp-reg_C-effctor"/>
</dbReference>
<dbReference type="InterPro" id="IPR011990">
    <property type="entry name" value="TPR-like_helical_dom_sf"/>
</dbReference>
<dbReference type="InterPro" id="IPR041617">
    <property type="entry name" value="TPR_MalT"/>
</dbReference>
<dbReference type="InterPro" id="IPR023768">
    <property type="entry name" value="Tscrpt_reg_HTH_MalT"/>
</dbReference>
<dbReference type="InterPro" id="IPR000792">
    <property type="entry name" value="Tscrpt_reg_LuxR_C"/>
</dbReference>
<dbReference type="InterPro" id="IPR036388">
    <property type="entry name" value="WH-like_DNA-bd_sf"/>
</dbReference>
<dbReference type="NCBIfam" id="NF003420">
    <property type="entry name" value="PRK04841.1"/>
    <property type="match status" value="1"/>
</dbReference>
<dbReference type="PANTHER" id="PTHR44688">
    <property type="entry name" value="DNA-BINDING TRANSCRIPTIONAL ACTIVATOR DEVR_DOSR"/>
    <property type="match status" value="1"/>
</dbReference>
<dbReference type="PANTHER" id="PTHR44688:SF16">
    <property type="entry name" value="DNA-BINDING TRANSCRIPTIONAL ACTIVATOR DEVR_DOSR"/>
    <property type="match status" value="1"/>
</dbReference>
<dbReference type="Pfam" id="PF00196">
    <property type="entry name" value="GerE"/>
    <property type="match status" value="1"/>
</dbReference>
<dbReference type="Pfam" id="PF17874">
    <property type="entry name" value="TPR_MalT"/>
    <property type="match status" value="1"/>
</dbReference>
<dbReference type="PRINTS" id="PR00038">
    <property type="entry name" value="HTHLUXR"/>
</dbReference>
<dbReference type="SMART" id="SM00421">
    <property type="entry name" value="HTH_LUXR"/>
    <property type="match status" value="1"/>
</dbReference>
<dbReference type="SUPFAM" id="SSF46894">
    <property type="entry name" value="C-terminal effector domain of the bipartite response regulators"/>
    <property type="match status" value="1"/>
</dbReference>
<dbReference type="SUPFAM" id="SSF52540">
    <property type="entry name" value="P-loop containing nucleoside triphosphate hydrolases"/>
    <property type="match status" value="1"/>
</dbReference>
<dbReference type="SUPFAM" id="SSF48452">
    <property type="entry name" value="TPR-like"/>
    <property type="match status" value="1"/>
</dbReference>
<dbReference type="PROSITE" id="PS00622">
    <property type="entry name" value="HTH_LUXR_1"/>
    <property type="match status" value="1"/>
</dbReference>
<dbReference type="PROSITE" id="PS50043">
    <property type="entry name" value="HTH_LUXR_2"/>
    <property type="match status" value="1"/>
</dbReference>
<name>MALT_YERE8</name>
<feature type="chain" id="PRO_1000085783" description="HTH-type transcriptional regulator MalT">
    <location>
        <begin position="1"/>
        <end position="903"/>
    </location>
</feature>
<feature type="domain" description="HTH luxR-type" evidence="1">
    <location>
        <begin position="832"/>
        <end position="897"/>
    </location>
</feature>
<feature type="DNA-binding region" description="H-T-H motif" evidence="1">
    <location>
        <begin position="856"/>
        <end position="875"/>
    </location>
</feature>
<feature type="binding site" evidence="1">
    <location>
        <begin position="39"/>
        <end position="46"/>
    </location>
    <ligand>
        <name>ATP</name>
        <dbReference type="ChEBI" id="CHEBI:30616"/>
    </ligand>
</feature>
<gene>
    <name evidence="1" type="primary">malT</name>
    <name type="ordered locus">YE3990</name>
</gene>
<keyword id="KW-0010">Activator</keyword>
<keyword id="KW-0067">ATP-binding</keyword>
<keyword id="KW-0119">Carbohydrate metabolism</keyword>
<keyword id="KW-0238">DNA-binding</keyword>
<keyword id="KW-0547">Nucleotide-binding</keyword>
<keyword id="KW-0804">Transcription</keyword>
<keyword id="KW-0805">Transcription regulation</keyword>
<accession>A1JSF2</accession>
<organism>
    <name type="scientific">Yersinia enterocolitica serotype O:8 / biotype 1B (strain NCTC 13174 / 8081)</name>
    <dbReference type="NCBI Taxonomy" id="393305"/>
    <lineage>
        <taxon>Bacteria</taxon>
        <taxon>Pseudomonadati</taxon>
        <taxon>Pseudomonadota</taxon>
        <taxon>Gammaproteobacteria</taxon>
        <taxon>Enterobacterales</taxon>
        <taxon>Yersiniaceae</taxon>
        <taxon>Yersinia</taxon>
    </lineage>
</organism>
<reference key="1">
    <citation type="journal article" date="2006" name="PLoS Genet.">
        <title>The complete genome sequence and comparative genome analysis of the high pathogenicity Yersinia enterocolitica strain 8081.</title>
        <authorList>
            <person name="Thomson N.R."/>
            <person name="Howard S."/>
            <person name="Wren B.W."/>
            <person name="Holden M.T.G."/>
            <person name="Crossman L."/>
            <person name="Challis G.L."/>
            <person name="Churcher C."/>
            <person name="Mungall K."/>
            <person name="Brooks K."/>
            <person name="Chillingworth T."/>
            <person name="Feltwell T."/>
            <person name="Abdellah Z."/>
            <person name="Hauser H."/>
            <person name="Jagels K."/>
            <person name="Maddison M."/>
            <person name="Moule S."/>
            <person name="Sanders M."/>
            <person name="Whitehead S."/>
            <person name="Quail M.A."/>
            <person name="Dougan G."/>
            <person name="Parkhill J."/>
            <person name="Prentice M.B."/>
        </authorList>
    </citation>
    <scope>NUCLEOTIDE SEQUENCE [LARGE SCALE GENOMIC DNA]</scope>
    <source>
        <strain>NCTC 13174 / 8081</strain>
    </source>
</reference>
<sequence>MLIPSKLSRPVRLQNTVIRDRLLVKLSGVANYRLTLINCPAGYGKTTLIAQWAADQSDLGWYSLDESDNQPERFATYLVAAIQLATGGHCSKSEAISQKHQYASLSALFAQLFIELSEWDGPLYLVIDDYHLITNDAIHEAMRFFLRHQPENLTLIMLSRTLPPLGIANLRVRDQLLELGMQQLAFNHQEAQQFFDCRLSVPLEQGDSSRLCDEVEGWATALQLIALSSRQPNSSAQKSAKRLAGLNASHLSDYLVDEVLDQVDSDARAFLLRCSVLRSMNDALIVRLTGEDNGQQRLEELERQGLFIHRMDDSGEWFCFHPLFATFLRQRCQWEMALELPELHHAAAEGWMALGYPAEAIHHALAAGDVGMLRDILLQHAWTLFNHSELALLEQCLVALPYSLLVQNPELALLQAWLAQSQHRYGEVNTLLERAESAMQERKIPIDEILRAEFDALRAQVAINAGKPEEAEKLATDALKYLPMANFYSRIVATSVTGEVHHCKGELSRALPMMQQTEQMARRHEAYHYALWALLQQSEILIAQGFLQAAYETQDKAFDLIHEQHLEQLPMHEFLLRIRSQVLWSWSRLDEAEEAARKGIEILVNYQPQQQLQCLAMLAKCSLARGDLDNANMYIQRCEALQHGSQYHLDWITNADKPRVIHWQMTGDKAAAANWLRQAEKPGMADNHFLQGQWRNIARIQIMLGRFNEAEVVLDELNENARRLRLTSDLNRNLLLSNILYWQTERKSEAQKALIESLSLANRTGFISHFVIEGEVMAQQLRQLIQLNALPELEQHRAQRILKDINQHHRHKFAHFDEIFVDKLLTHPQVPELIRTSPLTQREWQVLGLIYSGYSNDQIAGELEVAATTIKTHIRNLYQKLGVAHRQDAVQQAQRLLQMMGYV</sequence>
<evidence type="ECO:0000255" key="1">
    <source>
        <dbReference type="HAMAP-Rule" id="MF_01247"/>
    </source>
</evidence>
<protein>
    <recommendedName>
        <fullName evidence="1">HTH-type transcriptional regulator MalT</fullName>
    </recommendedName>
    <alternativeName>
        <fullName evidence="1">ATP-dependent transcriptional activator MalT</fullName>
    </alternativeName>
</protein>
<comment type="function">
    <text evidence="1">Positively regulates the transcription of the maltose regulon whose gene products are responsible for uptake and catabolism of malto-oligosaccharides. Specifically binds to the promoter region of its target genes, recognizing a short DNA motif called the MalT box.</text>
</comment>
<comment type="activity regulation">
    <text evidence="1">Activated by ATP and maltotriose, which are both required for DNA binding.</text>
</comment>
<comment type="subunit">
    <text evidence="1">Monomer in solution. Oligomerizes to an active state in the presence of the positive effectors ATP and maltotriose.</text>
</comment>
<comment type="similarity">
    <text evidence="1">Belongs to the MalT family.</text>
</comment>